<gene>
    <name type="primary">Tfap2a</name>
    <name type="synonym">Ap2tf</name>
    <name type="synonym">Tcfap2a</name>
</gene>
<comment type="function">
    <text evidence="4">Sequence-specific DNA-binding protein that interacts with inducible viral and cellular enhancer elements to regulate transcription of selected genes. AP-2 factors bind to the consensus sequence 5'-GCCNNNGGC-3' and activate genes involved in a large spectrum of important biological functions including proper eye, face, body wall, limb and neural tube development. They also suppress a number of genes including MCAM/MUC18, C/EBP alpha and MYC. AP-2-alpha is the only AP-2 protein required for early morphogenesis of the lens vesicle. Together with the CITED2 coactivator, stimulates the PITX2 P1 promoter transcription activation. Associates with chromatin to the PITX2 P1 promoter region.</text>
</comment>
<comment type="subunit">
    <text evidence="1">Binds DNA as a dimer. Can form homodimers or heterodimers with other AP-2 family members. Interacts with WWOX. Interacts with UBE2I. Interacts with RALBP1 in a complex also containing EPN1 and NUMB during interphase and mitosis (By similarity). Interacts with CITED4. Interacts with KCTD1; this interaction represses transcription activation. Interacts (via C-terminus) with CITED2 (via C-terminus); the interaction stimulates TFAP2A-transcriptional activation. Interacts (via N-terminus) with EP300 (via N-terminus); the interaction requires CITED2 (By similarity). Interacts with KCTD15; this interaction inhibits TFAP2A transcriptional activation (By similarity).</text>
</comment>
<comment type="subcellular location">
    <subcellularLocation>
        <location>Nucleus</location>
    </subcellularLocation>
</comment>
<comment type="alternative products">
    <event type="alternative splicing"/>
    <isoform>
        <id>P34056-1</id>
        <name>1</name>
        <sequence type="displayed"/>
    </isoform>
    <isoform>
        <id>P34056-2</id>
        <name>2</name>
        <sequence type="described" ref="VSP_006404"/>
    </isoform>
    <isoform>
        <id>P34056-3</id>
        <name>3</name>
        <sequence type="described" ref="VSP_006402"/>
    </isoform>
    <isoform>
        <id>P34056-4</id>
        <name>4</name>
        <sequence type="described" ref="VSP_006403"/>
    </isoform>
</comment>
<comment type="developmental stage">
    <text evidence="4">Expressed in the embryonic heart. Expressed from embryo day 9.5 to birth. At day 12.5, expressed in the midbrain, hindbrain, spinal cord, sensory ganglia, epidermis, nephric system and limbs. At mid-embryogenesis, isoform 3 is the most abundant form in the nervous system and total embryo, but the least abundant form in the epidermis. In adults, AP-2A is expressed in the eye, skin, kidney, prostate, thymus, skeletal muscle and very weakly, in the brain. Highest expression found in skin and eye.</text>
</comment>
<comment type="induction">
    <text>All isoforms are induced during retinoic acid-mediated differentiation and by cAMP stimulation of primary astrocytes. Isoform 3 is most strongly induced in the former case, isoform 1 in the latter case.</text>
</comment>
<comment type="domain">
    <text evidence="1">The PPxY motif mediates interaction with WWOX.</text>
</comment>
<comment type="PTM">
    <text evidence="1">Sumoylated on Lys-10; which inhibits transcriptional activity.</text>
</comment>
<comment type="similarity">
    <text evidence="5">Belongs to the AP-2 family.</text>
</comment>
<sequence length="437" mass="47971">MLWKLTDNIKYEDCEDRHDGTSNGTARLPQLGTVGQSPYTSAPPLSHTPNADFQPPYFPPPYQPIYPQSQDPYSHVNDPYSLNPLHAQPQPQHPGWPGQRQSQESGLLHTHRGLPHQLSGLDPRRDYRRHEDLLHGPHALGSGLGDLPIHSLPHAIEDVPHVEDPGINIPDQTVIKKGPVSLSKSNSNAVSAIPINKDNLFGGVVNPNEVFCSVPGRLSLLSSTSKYKVTVAEVQRRLSPPECLNASLLGGVLRRAKSKNGGRSLREKLDKIGLNLPAGRRKAANVTLLTSLVEGEAVHLARDFGYVCETEFPAKAVAEFLNRQHSDPNEQVARKNMLLATKQICKEFTDLLAQDRSPLGNSRPNPILEPGIQSCLTHFNLISHGFGSPAVCAAVTALQNYLTEALKAMDKMYLSNNPNSHTDNSAKSSDKEEKHRK</sequence>
<feature type="chain" id="PRO_0000184797" description="Transcription factor AP-2-alpha">
    <location>
        <begin position="1"/>
        <end position="437"/>
    </location>
</feature>
<feature type="region of interest" description="Disordered" evidence="3">
    <location>
        <begin position="14"/>
        <end position="107"/>
    </location>
</feature>
<feature type="region of interest" description="H-S-H (helix-span-helix), dimerization" evidence="2">
    <location>
        <begin position="280"/>
        <end position="410"/>
    </location>
</feature>
<feature type="region of interest" description="Disordered" evidence="3">
    <location>
        <begin position="414"/>
        <end position="437"/>
    </location>
</feature>
<feature type="short sequence motif" description="PPxY motif">
    <location>
        <begin position="57"/>
        <end position="62"/>
    </location>
</feature>
<feature type="compositionally biased region" description="Low complexity" evidence="3">
    <location>
        <begin position="65"/>
        <end position="74"/>
    </location>
</feature>
<feature type="compositionally biased region" description="Low complexity" evidence="3">
    <location>
        <begin position="88"/>
        <end position="101"/>
    </location>
</feature>
<feature type="compositionally biased region" description="Polar residues" evidence="3">
    <location>
        <begin position="414"/>
        <end position="427"/>
    </location>
</feature>
<feature type="compositionally biased region" description="Basic and acidic residues" evidence="3">
    <location>
        <begin position="428"/>
        <end position="437"/>
    </location>
</feature>
<feature type="modified residue" description="Phosphoserine; by PKA" evidence="2">
    <location>
        <position position="239"/>
    </location>
</feature>
<feature type="cross-link" description="Glycyl lysine isopeptide (Lys-Gly) (interchain with G-Cter in SUMO); alternate" evidence="1">
    <location>
        <position position="10"/>
    </location>
</feature>
<feature type="cross-link" description="Glycyl lysine isopeptide (Lys-Gly) (interchain with G-Cter in SUMO2); alternate" evidence="2">
    <location>
        <position position="10"/>
    </location>
</feature>
<feature type="cross-link" description="Glycyl lysine isopeptide (Lys-Gly) (interchain with G-Cter in SUMO2)" evidence="2">
    <location>
        <position position="177"/>
    </location>
</feature>
<feature type="cross-link" description="Glycyl lysine isopeptide (Lys-Gly) (interchain with G-Cter in SUMO2)" evidence="2">
    <location>
        <position position="184"/>
    </location>
</feature>
<feature type="splice variant" id="VSP_006402" description="In isoform 3." evidence="5">
    <original>MLWKLTDNIKYEDCE</original>
    <variation>MLVHSFSAM</variation>
    <location>
        <begin position="1"/>
        <end position="15"/>
    </location>
</feature>
<feature type="splice variant" id="VSP_006403" description="In isoform 4." evidence="5">
    <original>MLWKLTDNIKYEDCE</original>
    <variation>MNSVVVDTPYFGGLPTLGLWNGFSRVVEALRLISSSPSRLAFFQ</variation>
    <location>
        <begin position="1"/>
        <end position="15"/>
    </location>
</feature>
<feature type="splice variant" id="VSP_006404" description="In isoform 2." evidence="5">
    <location>
        <begin position="16"/>
        <end position="160"/>
    </location>
</feature>
<feature type="sequence conflict" description="In Ref. 2; AAH07471." evidence="5" ref="2">
    <original>P</original>
    <variation>S</variation>
    <location>
        <position position="38"/>
    </location>
</feature>
<feature type="sequence conflict" description="In Ref. 2 and 3." evidence="5" ref="2 3">
    <original>A</original>
    <variation>G</variation>
    <location>
        <position position="139"/>
    </location>
</feature>
<feature type="sequence conflict" description="In Ref. 4." evidence="5" ref="4">
    <original>DV</original>
    <variation>RL</variation>
    <location>
        <begin position="158"/>
        <end position="159"/>
    </location>
</feature>
<feature type="sequence conflict" description="In Ref. 5." evidence="5" ref="5">
    <location>
        <position position="390"/>
    </location>
</feature>
<keyword id="KW-0010">Activator</keyword>
<keyword id="KW-0025">Alternative splicing</keyword>
<keyword id="KW-0238">DNA-binding</keyword>
<keyword id="KW-1017">Isopeptide bond</keyword>
<keyword id="KW-0539">Nucleus</keyword>
<keyword id="KW-0597">Phosphoprotein</keyword>
<keyword id="KW-1185">Reference proteome</keyword>
<keyword id="KW-0804">Transcription</keyword>
<keyword id="KW-0805">Transcription regulation</keyword>
<keyword id="KW-0832">Ubl conjugation</keyword>
<organism>
    <name type="scientific">Mus musculus</name>
    <name type="common">Mouse</name>
    <dbReference type="NCBI Taxonomy" id="10090"/>
    <lineage>
        <taxon>Eukaryota</taxon>
        <taxon>Metazoa</taxon>
        <taxon>Chordata</taxon>
        <taxon>Craniata</taxon>
        <taxon>Vertebrata</taxon>
        <taxon>Euteleostomi</taxon>
        <taxon>Mammalia</taxon>
        <taxon>Eutheria</taxon>
        <taxon>Euarchontoglires</taxon>
        <taxon>Glires</taxon>
        <taxon>Rodentia</taxon>
        <taxon>Myomorpha</taxon>
        <taxon>Muroidea</taxon>
        <taxon>Muridae</taxon>
        <taxon>Murinae</taxon>
        <taxon>Mus</taxon>
        <taxon>Mus</taxon>
    </lineage>
</organism>
<reference key="1">
    <citation type="journal article" date="1993" name="Nucleic Acids Res.">
        <title>The complete murine cDNA sequence of the transcription factor AP-2.</title>
        <authorList>
            <person name="Moser M."/>
            <person name="Pscherer A."/>
            <person name="Bauer R."/>
            <person name="Imhof A."/>
            <person name="Seegers S."/>
            <person name="Kerscher M."/>
            <person name="Buettner R."/>
        </authorList>
    </citation>
    <scope>NUCLEOTIDE SEQUENCE [MRNA]</scope>
    <source>
        <strain>NIH Swiss</strain>
    </source>
</reference>
<reference key="2">
    <citation type="journal article" date="2004" name="Genome Res.">
        <title>The status, quality, and expansion of the NIH full-length cDNA project: the Mammalian Gene Collection (MGC).</title>
        <authorList>
            <consortium name="The MGC Project Team"/>
        </authorList>
    </citation>
    <scope>NUCLEOTIDE SEQUENCE [LARGE SCALE MRNA]</scope>
</reference>
<reference key="3">
    <citation type="journal article" date="1995" name="Dev. Biol.">
        <title>Alternative mRNAs encode multiple isoforms of transcription factor AP-2 during murine embryogenesis.</title>
        <authorList>
            <person name="Meier P."/>
            <person name="Koedood M."/>
            <person name="Philipp J."/>
            <person name="Fontana A."/>
            <person name="Mitchell P.J."/>
        </authorList>
    </citation>
    <scope>NUCLEOTIDE SEQUENCE [GENOMIC DNA / MRNA] OF 1-279</scope>
    <scope>ALTERNATIVE SPLICING</scope>
    <source>
        <strain>129/4</strain>
        <strain>ICR</strain>
        <tissue>Embryo</tissue>
    </source>
</reference>
<reference key="4">
    <citation type="journal article" date="2005" name="Science">
        <title>The transcriptional landscape of the mammalian genome.</title>
        <authorList>
            <person name="Carninci P."/>
            <person name="Kasukawa T."/>
            <person name="Katayama S."/>
            <person name="Gough J."/>
            <person name="Frith M.C."/>
            <person name="Maeda N."/>
            <person name="Oyama R."/>
            <person name="Ravasi T."/>
            <person name="Lenhard B."/>
            <person name="Wells C."/>
            <person name="Kodzius R."/>
            <person name="Shimokawa K."/>
            <person name="Bajic V.B."/>
            <person name="Brenner S.E."/>
            <person name="Batalov S."/>
            <person name="Forrest A.R."/>
            <person name="Zavolan M."/>
            <person name="Davis M.J."/>
            <person name="Wilming L.G."/>
            <person name="Aidinis V."/>
            <person name="Allen J.E."/>
            <person name="Ambesi-Impiombato A."/>
            <person name="Apweiler R."/>
            <person name="Aturaliya R.N."/>
            <person name="Bailey T.L."/>
            <person name="Bansal M."/>
            <person name="Baxter L."/>
            <person name="Beisel K.W."/>
            <person name="Bersano T."/>
            <person name="Bono H."/>
            <person name="Chalk A.M."/>
            <person name="Chiu K.P."/>
            <person name="Choudhary V."/>
            <person name="Christoffels A."/>
            <person name="Clutterbuck D.R."/>
            <person name="Crowe M.L."/>
            <person name="Dalla E."/>
            <person name="Dalrymple B.P."/>
            <person name="de Bono B."/>
            <person name="Della Gatta G."/>
            <person name="di Bernardo D."/>
            <person name="Down T."/>
            <person name="Engstrom P."/>
            <person name="Fagiolini M."/>
            <person name="Faulkner G."/>
            <person name="Fletcher C.F."/>
            <person name="Fukushima T."/>
            <person name="Furuno M."/>
            <person name="Futaki S."/>
            <person name="Gariboldi M."/>
            <person name="Georgii-Hemming P."/>
            <person name="Gingeras T.R."/>
            <person name="Gojobori T."/>
            <person name="Green R.E."/>
            <person name="Gustincich S."/>
            <person name="Harbers M."/>
            <person name="Hayashi Y."/>
            <person name="Hensch T.K."/>
            <person name="Hirokawa N."/>
            <person name="Hill D."/>
            <person name="Huminiecki L."/>
            <person name="Iacono M."/>
            <person name="Ikeo K."/>
            <person name="Iwama A."/>
            <person name="Ishikawa T."/>
            <person name="Jakt M."/>
            <person name="Kanapin A."/>
            <person name="Katoh M."/>
            <person name="Kawasawa Y."/>
            <person name="Kelso J."/>
            <person name="Kitamura H."/>
            <person name="Kitano H."/>
            <person name="Kollias G."/>
            <person name="Krishnan S.P."/>
            <person name="Kruger A."/>
            <person name="Kummerfeld S.K."/>
            <person name="Kurochkin I.V."/>
            <person name="Lareau L.F."/>
            <person name="Lazarevic D."/>
            <person name="Lipovich L."/>
            <person name="Liu J."/>
            <person name="Liuni S."/>
            <person name="McWilliam S."/>
            <person name="Madan Babu M."/>
            <person name="Madera M."/>
            <person name="Marchionni L."/>
            <person name="Matsuda H."/>
            <person name="Matsuzawa S."/>
            <person name="Miki H."/>
            <person name="Mignone F."/>
            <person name="Miyake S."/>
            <person name="Morris K."/>
            <person name="Mottagui-Tabar S."/>
            <person name="Mulder N."/>
            <person name="Nakano N."/>
            <person name="Nakauchi H."/>
            <person name="Ng P."/>
            <person name="Nilsson R."/>
            <person name="Nishiguchi S."/>
            <person name="Nishikawa S."/>
            <person name="Nori F."/>
            <person name="Ohara O."/>
            <person name="Okazaki Y."/>
            <person name="Orlando V."/>
            <person name="Pang K.C."/>
            <person name="Pavan W.J."/>
            <person name="Pavesi G."/>
            <person name="Pesole G."/>
            <person name="Petrovsky N."/>
            <person name="Piazza S."/>
            <person name="Reed J."/>
            <person name="Reid J.F."/>
            <person name="Ring B.Z."/>
            <person name="Ringwald M."/>
            <person name="Rost B."/>
            <person name="Ruan Y."/>
            <person name="Salzberg S.L."/>
            <person name="Sandelin A."/>
            <person name="Schneider C."/>
            <person name="Schoenbach C."/>
            <person name="Sekiguchi K."/>
            <person name="Semple C.A."/>
            <person name="Seno S."/>
            <person name="Sessa L."/>
            <person name="Sheng Y."/>
            <person name="Shibata Y."/>
            <person name="Shimada H."/>
            <person name="Shimada K."/>
            <person name="Silva D."/>
            <person name="Sinclair B."/>
            <person name="Sperling S."/>
            <person name="Stupka E."/>
            <person name="Sugiura K."/>
            <person name="Sultana R."/>
            <person name="Takenaka Y."/>
            <person name="Taki K."/>
            <person name="Tammoja K."/>
            <person name="Tan S.L."/>
            <person name="Tang S."/>
            <person name="Taylor M.S."/>
            <person name="Tegner J."/>
            <person name="Teichmann S.A."/>
            <person name="Ueda H.R."/>
            <person name="van Nimwegen E."/>
            <person name="Verardo R."/>
            <person name="Wei C.L."/>
            <person name="Yagi K."/>
            <person name="Yamanishi H."/>
            <person name="Zabarovsky E."/>
            <person name="Zhu S."/>
            <person name="Zimmer A."/>
            <person name="Hide W."/>
            <person name="Bult C."/>
            <person name="Grimmond S.M."/>
            <person name="Teasdale R.D."/>
            <person name="Liu E.T."/>
            <person name="Brusic V."/>
            <person name="Quackenbush J."/>
            <person name="Wahlestedt C."/>
            <person name="Mattick J.S."/>
            <person name="Hume D.A."/>
            <person name="Kai C."/>
            <person name="Sasaki D."/>
            <person name="Tomaru Y."/>
            <person name="Fukuda S."/>
            <person name="Kanamori-Katayama M."/>
            <person name="Suzuki M."/>
            <person name="Aoki J."/>
            <person name="Arakawa T."/>
            <person name="Iida J."/>
            <person name="Imamura K."/>
            <person name="Itoh M."/>
            <person name="Kato T."/>
            <person name="Kawaji H."/>
            <person name="Kawagashira N."/>
            <person name="Kawashima T."/>
            <person name="Kojima M."/>
            <person name="Kondo S."/>
            <person name="Konno H."/>
            <person name="Nakano K."/>
            <person name="Ninomiya N."/>
            <person name="Nishio T."/>
            <person name="Okada M."/>
            <person name="Plessy C."/>
            <person name="Shibata K."/>
            <person name="Shiraki T."/>
            <person name="Suzuki S."/>
            <person name="Tagami M."/>
            <person name="Waki K."/>
            <person name="Watahiki A."/>
            <person name="Okamura-Oho Y."/>
            <person name="Suzuki H."/>
            <person name="Kawai J."/>
            <person name="Hayashizaki Y."/>
        </authorList>
    </citation>
    <scope>NUCLEOTIDE SEQUENCE [LARGE SCALE MRNA] OF 158-437</scope>
    <source>
        <strain>C57BL/6J</strain>
        <tissue>Embryonic head</tissue>
    </source>
</reference>
<reference key="5">
    <citation type="journal article" date="1991" name="Genes Dev.">
        <title>Transcription factor AP-2 is expressed in neural crest cell lineages during mouse embryogenesis.</title>
        <authorList>
            <person name="Mitchell P.J."/>
            <person name="Timmons P.M."/>
            <person name="Hebert J.M."/>
            <person name="Rigby P.W.J."/>
            <person name="Tjian R."/>
        </authorList>
    </citation>
    <scope>NUCLEOTIDE SEQUENCE [MRNA] OF 259-437</scope>
</reference>
<reference key="6">
    <citation type="journal article" date="2002" name="Genomics">
        <title>Cloning of mouse Cited4, a member of the CITED family p300/CBP-binding transcriptional coactivators: induced expression in mammary epithelial cells.</title>
        <authorList>
            <person name="Yahata T."/>
            <person name="Takedatsu H."/>
            <person name="Dunwoodie S.L."/>
            <person name="Braganca J."/>
            <person name="Swingler T."/>
            <person name="Withington S.L."/>
            <person name="Hur J."/>
            <person name="Coser K.R."/>
            <person name="Isselbacher K.J."/>
            <person name="Bhattacharya S."/>
            <person name="Shioda T."/>
        </authorList>
    </citation>
    <scope>INTERACTION WITH CITED4</scope>
</reference>
<reference key="7">
    <citation type="journal article" date="2004" name="Nat. Genet.">
        <title>Cited2 controls left-right patterning and heart development through a Nodal-Pitx2c pathway.</title>
        <authorList>
            <person name="Bamforth S.D."/>
            <person name="Braganca J."/>
            <person name="Farthing C.R."/>
            <person name="Schneider J.E."/>
            <person name="Broadbent C."/>
            <person name="Michell A.C."/>
            <person name="Clarke K."/>
            <person name="Neubauer S."/>
            <person name="Norris D."/>
            <person name="Brown N.A."/>
            <person name="Anderson R.H."/>
            <person name="Bhattacharya S."/>
        </authorList>
    </citation>
    <scope>FUNCTION</scope>
    <scope>ASSOCIATION WITH CHROMATIN</scope>
    <scope>DEVELOPMENTAL STAGE</scope>
</reference>
<evidence type="ECO:0000250" key="1"/>
<evidence type="ECO:0000250" key="2">
    <source>
        <dbReference type="UniProtKB" id="P05549"/>
    </source>
</evidence>
<evidence type="ECO:0000256" key="3">
    <source>
        <dbReference type="SAM" id="MobiDB-lite"/>
    </source>
</evidence>
<evidence type="ECO:0000269" key="4">
    <source>
    </source>
</evidence>
<evidence type="ECO:0000305" key="5"/>
<proteinExistence type="evidence at protein level"/>
<protein>
    <recommendedName>
        <fullName>Transcription factor AP-2-alpha</fullName>
        <shortName>AP2-alpha</shortName>
    </recommendedName>
    <alternativeName>
        <fullName>AP-2 transcription factor</fullName>
    </alternativeName>
    <alternativeName>
        <fullName>Activating enhancer-binding protein 2-alpha</fullName>
    </alternativeName>
    <alternativeName>
        <fullName>Activator protein 2</fullName>
        <shortName>AP-2</shortName>
    </alternativeName>
</protein>
<dbReference type="EMBL" id="X74216">
    <property type="protein sequence ID" value="CAA52292.1"/>
    <property type="molecule type" value="mRNA"/>
</dbReference>
<dbReference type="EMBL" id="BC018226">
    <property type="protein sequence ID" value="AAH18226.1"/>
    <property type="molecule type" value="mRNA"/>
</dbReference>
<dbReference type="EMBL" id="BC007471">
    <property type="protein sequence ID" value="AAH07471.1"/>
    <property type="molecule type" value="mRNA"/>
</dbReference>
<dbReference type="EMBL" id="U17285">
    <property type="protein sequence ID" value="AAA85681.1"/>
    <property type="molecule type" value="mRNA"/>
</dbReference>
<dbReference type="EMBL" id="U17291">
    <property type="protein sequence ID" value="AAA85678.1"/>
    <property type="molecule type" value="Genomic_DNA"/>
</dbReference>
<dbReference type="EMBL" id="U17289">
    <property type="protein sequence ID" value="AAA85678.1"/>
    <property type="status" value="JOINED"/>
    <property type="molecule type" value="Genomic_DNA"/>
</dbReference>
<dbReference type="EMBL" id="U17286">
    <property type="protein sequence ID" value="AAA85682.1"/>
    <property type="molecule type" value="mRNA"/>
</dbReference>
<dbReference type="EMBL" id="U17287">
    <property type="protein sequence ID" value="AAA85683.1"/>
    <property type="molecule type" value="mRNA"/>
</dbReference>
<dbReference type="EMBL" id="U17291">
    <property type="protein sequence ID" value="AAA85679.1"/>
    <property type="molecule type" value="Genomic_DNA"/>
</dbReference>
<dbReference type="EMBL" id="U17290">
    <property type="protein sequence ID" value="AAA85679.1"/>
    <property type="status" value="JOINED"/>
    <property type="molecule type" value="Genomic_DNA"/>
</dbReference>
<dbReference type="EMBL" id="U17288">
    <property type="protein sequence ID" value="AAA85684.1"/>
    <property type="molecule type" value="mRNA"/>
</dbReference>
<dbReference type="EMBL" id="U17291">
    <property type="protein sequence ID" value="AAA85680.1"/>
    <property type="molecule type" value="Genomic_DNA"/>
</dbReference>
<dbReference type="EMBL" id="AK013900">
    <property type="protein sequence ID" value="BAB29047.1"/>
    <property type="molecule type" value="mRNA"/>
</dbReference>
<dbReference type="EMBL" id="X57012">
    <property type="protein sequence ID" value="CAA40331.1"/>
    <property type="molecule type" value="mRNA"/>
</dbReference>
<dbReference type="CCDS" id="CCDS49243.1">
    <molecule id="P34056-3"/>
</dbReference>
<dbReference type="PIR" id="S42111">
    <property type="entry name" value="S42111"/>
</dbReference>
<dbReference type="RefSeq" id="NP_001288603.1">
    <property type="nucleotide sequence ID" value="NM_001301674.1"/>
</dbReference>
<dbReference type="RefSeq" id="NP_035677.2">
    <property type="nucleotide sequence ID" value="NM_011547.4"/>
</dbReference>
<dbReference type="SMR" id="P34056"/>
<dbReference type="BioGRID" id="204011">
    <property type="interactions" value="7"/>
</dbReference>
<dbReference type="CORUM" id="P34056"/>
<dbReference type="FunCoup" id="P34056">
    <property type="interactions" value="1256"/>
</dbReference>
<dbReference type="IntAct" id="P34056">
    <property type="interactions" value="1"/>
</dbReference>
<dbReference type="STRING" id="10090.ENSMUSP00000105822"/>
<dbReference type="iPTMnet" id="P34056"/>
<dbReference type="PhosphoSitePlus" id="P34056"/>
<dbReference type="PaxDb" id="10090-ENSMUSP00000105822"/>
<dbReference type="PeptideAtlas" id="P34056"/>
<dbReference type="ProteomicsDB" id="296054">
    <molecule id="P34056-1"/>
</dbReference>
<dbReference type="ProteomicsDB" id="296055">
    <molecule id="P34056-2"/>
</dbReference>
<dbReference type="ProteomicsDB" id="296056">
    <molecule id="P34056-3"/>
</dbReference>
<dbReference type="ProteomicsDB" id="296057">
    <molecule id="P34056-4"/>
</dbReference>
<dbReference type="Pumba" id="P34056"/>
<dbReference type="DNASU" id="21418"/>
<dbReference type="GeneID" id="21418"/>
<dbReference type="KEGG" id="mmu:21418"/>
<dbReference type="UCSC" id="uc007qei.1">
    <molecule id="P34056-4"/>
    <property type="organism name" value="mouse"/>
</dbReference>
<dbReference type="UCSC" id="uc011yyq.1">
    <molecule id="P34056-2"/>
    <property type="organism name" value="mouse"/>
</dbReference>
<dbReference type="AGR" id="MGI:104671"/>
<dbReference type="CTD" id="7020"/>
<dbReference type="MGI" id="MGI:104671">
    <property type="gene designation" value="Tfap2a"/>
</dbReference>
<dbReference type="eggNOG" id="KOG3811">
    <property type="taxonomic scope" value="Eukaryota"/>
</dbReference>
<dbReference type="InParanoid" id="P34056"/>
<dbReference type="OrthoDB" id="6252992at2759"/>
<dbReference type="PhylomeDB" id="P34056"/>
<dbReference type="TreeFam" id="TF313718"/>
<dbReference type="Reactome" id="R-MMU-8864260">
    <property type="pathway name" value="Transcriptional regulation by the AP-2 (TFAP2) family of transcription factors"/>
</dbReference>
<dbReference type="Reactome" id="R-MMU-8866904">
    <property type="pathway name" value="Negative regulation of activity of TFAP2 (AP-2) family transcription factors"/>
</dbReference>
<dbReference type="Reactome" id="R-MMU-8866907">
    <property type="pathway name" value="Activation of the TFAP2 (AP-2) family of transcription factors"/>
</dbReference>
<dbReference type="Reactome" id="R-MMU-8869496">
    <property type="pathway name" value="TFAP2A acts as a transcriptional repressor during retinoic acid induced cell differentiation"/>
</dbReference>
<dbReference type="Reactome" id="R-MMU-9834899">
    <property type="pathway name" value="Specification of the neural plate border"/>
</dbReference>
<dbReference type="BioGRID-ORCS" id="21418">
    <property type="hits" value="5 hits in 77 CRISPR screens"/>
</dbReference>
<dbReference type="ChiTaRS" id="Tfap2a">
    <property type="organism name" value="mouse"/>
</dbReference>
<dbReference type="PRO" id="PR:P34056"/>
<dbReference type="Proteomes" id="UP000000589">
    <property type="component" value="Unplaced"/>
</dbReference>
<dbReference type="RNAct" id="P34056">
    <property type="molecule type" value="protein"/>
</dbReference>
<dbReference type="GO" id="GO:0005905">
    <property type="term" value="C:clathrin-coated pit"/>
    <property type="evidence" value="ECO:0000314"/>
    <property type="project" value="MGI"/>
</dbReference>
<dbReference type="GO" id="GO:0005634">
    <property type="term" value="C:nucleus"/>
    <property type="evidence" value="ECO:0000314"/>
    <property type="project" value="MGI"/>
</dbReference>
<dbReference type="GO" id="GO:0005667">
    <property type="term" value="C:transcription regulator complex"/>
    <property type="evidence" value="ECO:0000304"/>
    <property type="project" value="MGI"/>
</dbReference>
<dbReference type="GO" id="GO:0003682">
    <property type="term" value="F:chromatin binding"/>
    <property type="evidence" value="ECO:0000314"/>
    <property type="project" value="UniProtKB"/>
</dbReference>
<dbReference type="GO" id="GO:0000987">
    <property type="term" value="F:cis-regulatory region sequence-specific DNA binding"/>
    <property type="evidence" value="ECO:0000314"/>
    <property type="project" value="MGI"/>
</dbReference>
<dbReference type="GO" id="GO:0001228">
    <property type="term" value="F:DNA-binding transcription activator activity, RNA polymerase II-specific"/>
    <property type="evidence" value="ECO:0000314"/>
    <property type="project" value="UniProtKB"/>
</dbReference>
<dbReference type="GO" id="GO:0003700">
    <property type="term" value="F:DNA-binding transcription factor activity"/>
    <property type="evidence" value="ECO:0000314"/>
    <property type="project" value="MGI"/>
</dbReference>
<dbReference type="GO" id="GO:0000981">
    <property type="term" value="F:DNA-binding transcription factor activity, RNA polymerase II-specific"/>
    <property type="evidence" value="ECO:0000250"/>
    <property type="project" value="UniProtKB"/>
</dbReference>
<dbReference type="GO" id="GO:0001227">
    <property type="term" value="F:DNA-binding transcription repressor activity, RNA polymerase II-specific"/>
    <property type="evidence" value="ECO:0000314"/>
    <property type="project" value="MGI"/>
</dbReference>
<dbReference type="GO" id="GO:0000978">
    <property type="term" value="F:RNA polymerase II cis-regulatory region sequence-specific DNA binding"/>
    <property type="evidence" value="ECO:0000314"/>
    <property type="project" value="MGI"/>
</dbReference>
<dbReference type="GO" id="GO:0000977">
    <property type="term" value="F:RNA polymerase II transcription regulatory region sequence-specific DNA binding"/>
    <property type="evidence" value="ECO:0000314"/>
    <property type="project" value="NTNU_SB"/>
</dbReference>
<dbReference type="GO" id="GO:0000976">
    <property type="term" value="F:transcription cis-regulatory region binding"/>
    <property type="evidence" value="ECO:0000250"/>
    <property type="project" value="UniProtKB"/>
</dbReference>
<dbReference type="GO" id="GO:0003713">
    <property type="term" value="F:transcription coactivator activity"/>
    <property type="evidence" value="ECO:0000314"/>
    <property type="project" value="UniProtKB"/>
</dbReference>
<dbReference type="GO" id="GO:0003714">
    <property type="term" value="F:transcription corepressor activity"/>
    <property type="evidence" value="ECO:0000314"/>
    <property type="project" value="UniProtKB"/>
</dbReference>
<dbReference type="GO" id="GO:0021506">
    <property type="term" value="P:anterior neuropore closure"/>
    <property type="evidence" value="ECO:0000315"/>
    <property type="project" value="MGI"/>
</dbReference>
<dbReference type="GO" id="GO:0071711">
    <property type="term" value="P:basement membrane organization"/>
    <property type="evidence" value="ECO:0000315"/>
    <property type="project" value="MGI"/>
</dbReference>
<dbReference type="GO" id="GO:0060349">
    <property type="term" value="P:bone morphogenesis"/>
    <property type="evidence" value="ECO:0000315"/>
    <property type="project" value="UniProtKB"/>
</dbReference>
<dbReference type="GO" id="GO:0008283">
    <property type="term" value="P:cell population proliferation"/>
    <property type="evidence" value="ECO:0000315"/>
    <property type="project" value="MGI"/>
</dbReference>
<dbReference type="GO" id="GO:0071281">
    <property type="term" value="P:cellular response to iron ion"/>
    <property type="evidence" value="ECO:0000250"/>
    <property type="project" value="UniProtKB"/>
</dbReference>
<dbReference type="GO" id="GO:0061303">
    <property type="term" value="P:cornea development in camera-type eye"/>
    <property type="evidence" value="ECO:0000315"/>
    <property type="project" value="MGI"/>
</dbReference>
<dbReference type="GO" id="GO:0010172">
    <property type="term" value="P:embryonic body morphogenesis"/>
    <property type="evidence" value="ECO:0000315"/>
    <property type="project" value="MGI"/>
</dbReference>
<dbReference type="GO" id="GO:0048596">
    <property type="term" value="P:embryonic camera-type eye morphogenesis"/>
    <property type="evidence" value="ECO:0000315"/>
    <property type="project" value="MGI"/>
</dbReference>
<dbReference type="GO" id="GO:0048701">
    <property type="term" value="P:embryonic cranial skeleton morphogenesis"/>
    <property type="evidence" value="ECO:0000315"/>
    <property type="project" value="UniProtKB"/>
</dbReference>
<dbReference type="GO" id="GO:0035115">
    <property type="term" value="P:embryonic forelimb morphogenesis"/>
    <property type="evidence" value="ECO:0000315"/>
    <property type="project" value="UniProtKB"/>
</dbReference>
<dbReference type="GO" id="GO:0009880">
    <property type="term" value="P:embryonic pattern specification"/>
    <property type="evidence" value="ECO:0000315"/>
    <property type="project" value="MGI"/>
</dbReference>
<dbReference type="GO" id="GO:0007173">
    <property type="term" value="P:epidermal growth factor receptor signaling pathway"/>
    <property type="evidence" value="ECO:0000315"/>
    <property type="project" value="MGI"/>
</dbReference>
<dbReference type="GO" id="GO:0048730">
    <property type="term" value="P:epidermis morphogenesis"/>
    <property type="evidence" value="ECO:0000315"/>
    <property type="project" value="MGI"/>
</dbReference>
<dbReference type="GO" id="GO:0061029">
    <property type="term" value="P:eyelid development in camera-type eye"/>
    <property type="evidence" value="ECO:0000315"/>
    <property type="project" value="UniProtKB"/>
</dbReference>
<dbReference type="GO" id="GO:0060325">
    <property type="term" value="P:face morphogenesis"/>
    <property type="evidence" value="ECO:0000315"/>
    <property type="project" value="MGI"/>
</dbReference>
<dbReference type="GO" id="GO:0010761">
    <property type="term" value="P:fibroblast migration"/>
    <property type="evidence" value="ECO:0000315"/>
    <property type="project" value="MGI"/>
</dbReference>
<dbReference type="GO" id="GO:0021884">
    <property type="term" value="P:forebrain neuron development"/>
    <property type="evidence" value="ECO:0000315"/>
    <property type="project" value="MGI"/>
</dbReference>
<dbReference type="GO" id="GO:0035136">
    <property type="term" value="P:forelimb morphogenesis"/>
    <property type="evidence" value="ECO:0000315"/>
    <property type="project" value="MGI"/>
</dbReference>
<dbReference type="GO" id="GO:0042472">
    <property type="term" value="P:inner ear morphogenesis"/>
    <property type="evidence" value="ECO:0000250"/>
    <property type="project" value="UniProtKB"/>
</dbReference>
<dbReference type="GO" id="GO:0003334">
    <property type="term" value="P:keratinocyte development"/>
    <property type="evidence" value="ECO:0000316"/>
    <property type="project" value="MGI"/>
</dbReference>
<dbReference type="GO" id="GO:0001822">
    <property type="term" value="P:kidney development"/>
    <property type="evidence" value="ECO:0000250"/>
    <property type="project" value="UniProtKB"/>
</dbReference>
<dbReference type="GO" id="GO:0060235">
    <property type="term" value="P:lens induction in camera-type eye"/>
    <property type="evidence" value="ECO:0000315"/>
    <property type="project" value="MGI"/>
</dbReference>
<dbReference type="GO" id="GO:0002089">
    <property type="term" value="P:lens morphogenesis in camera-type eye"/>
    <property type="evidence" value="ECO:0000315"/>
    <property type="project" value="MGI"/>
</dbReference>
<dbReference type="GO" id="GO:0072210">
    <property type="term" value="P:metanephric nephron development"/>
    <property type="evidence" value="ECO:0000270"/>
    <property type="project" value="UniProtKB"/>
</dbReference>
<dbReference type="GO" id="GO:0043066">
    <property type="term" value="P:negative regulation of apoptotic process"/>
    <property type="evidence" value="ECO:0000250"/>
    <property type="project" value="UniProtKB"/>
</dbReference>
<dbReference type="GO" id="GO:0008285">
    <property type="term" value="P:negative regulation of cell population proliferation"/>
    <property type="evidence" value="ECO:0000315"/>
    <property type="project" value="MGI"/>
</dbReference>
<dbReference type="GO" id="GO:0042059">
    <property type="term" value="P:negative regulation of epidermal growth factor receptor signaling pathway"/>
    <property type="evidence" value="ECO:0000315"/>
    <property type="project" value="MGI"/>
</dbReference>
<dbReference type="GO" id="GO:0043524">
    <property type="term" value="P:negative regulation of neuron apoptotic process"/>
    <property type="evidence" value="ECO:0000316"/>
    <property type="project" value="MGI"/>
</dbReference>
<dbReference type="GO" id="GO:2000378">
    <property type="term" value="P:negative regulation of reactive oxygen species metabolic process"/>
    <property type="evidence" value="ECO:0000250"/>
    <property type="project" value="UniProtKB"/>
</dbReference>
<dbReference type="GO" id="GO:0010944">
    <property type="term" value="P:negative regulation of transcription by competitive promoter binding"/>
    <property type="evidence" value="ECO:0000250"/>
    <property type="project" value="UniProtKB"/>
</dbReference>
<dbReference type="GO" id="GO:0000122">
    <property type="term" value="P:negative regulation of transcription by RNA polymerase II"/>
    <property type="evidence" value="ECO:0000314"/>
    <property type="project" value="UniProtKB"/>
</dbReference>
<dbReference type="GO" id="GO:0007399">
    <property type="term" value="P:nervous system development"/>
    <property type="evidence" value="ECO:0000270"/>
    <property type="project" value="UniProtKB"/>
</dbReference>
<dbReference type="GO" id="GO:0014032">
    <property type="term" value="P:neural crest cell development"/>
    <property type="evidence" value="ECO:0000315"/>
    <property type="project" value="MGI"/>
</dbReference>
<dbReference type="GO" id="GO:0001843">
    <property type="term" value="P:neural tube closure"/>
    <property type="evidence" value="ECO:0000315"/>
    <property type="project" value="MGI"/>
</dbReference>
<dbReference type="GO" id="GO:0051402">
    <property type="term" value="P:neuron apoptotic process"/>
    <property type="evidence" value="ECO:0000316"/>
    <property type="project" value="MGI"/>
</dbReference>
<dbReference type="GO" id="GO:0021623">
    <property type="term" value="P:oculomotor nerve formation"/>
    <property type="evidence" value="ECO:0000315"/>
    <property type="project" value="UniProtKB"/>
</dbReference>
<dbReference type="GO" id="GO:0003409">
    <property type="term" value="P:optic cup structural organization"/>
    <property type="evidence" value="ECO:0000315"/>
    <property type="project" value="UniProtKB"/>
</dbReference>
<dbReference type="GO" id="GO:0003404">
    <property type="term" value="P:optic vesicle morphogenesis"/>
    <property type="evidence" value="ECO:0000315"/>
    <property type="project" value="UniProtKB"/>
</dbReference>
<dbReference type="GO" id="GO:0003151">
    <property type="term" value="P:outflow tract morphogenesis"/>
    <property type="evidence" value="ECO:0000315"/>
    <property type="project" value="MGI"/>
</dbReference>
<dbReference type="GO" id="GO:0030501">
    <property type="term" value="P:positive regulation of bone mineralization"/>
    <property type="evidence" value="ECO:0000250"/>
    <property type="project" value="UniProtKB"/>
</dbReference>
<dbReference type="GO" id="GO:0045893">
    <property type="term" value="P:positive regulation of DNA-templated transcription"/>
    <property type="evidence" value="ECO:0000314"/>
    <property type="project" value="UniProtKB"/>
</dbReference>
<dbReference type="GO" id="GO:0010763">
    <property type="term" value="P:positive regulation of fibroblast migration"/>
    <property type="evidence" value="ECO:0000315"/>
    <property type="project" value="MGI"/>
</dbReference>
<dbReference type="GO" id="GO:0010628">
    <property type="term" value="P:positive regulation of gene expression"/>
    <property type="evidence" value="ECO:0000314"/>
    <property type="project" value="UniProtKB"/>
</dbReference>
<dbReference type="GO" id="GO:0070172">
    <property type="term" value="P:positive regulation of tooth mineralization"/>
    <property type="evidence" value="ECO:0000250"/>
    <property type="project" value="UniProtKB"/>
</dbReference>
<dbReference type="GO" id="GO:0045944">
    <property type="term" value="P:positive regulation of transcription by RNA polymerase II"/>
    <property type="evidence" value="ECO:0000314"/>
    <property type="project" value="UniProtKB"/>
</dbReference>
<dbReference type="GO" id="GO:0006355">
    <property type="term" value="P:regulation of DNA-templated transcription"/>
    <property type="evidence" value="ECO:0000314"/>
    <property type="project" value="MGI"/>
</dbReference>
<dbReference type="GO" id="GO:0045664">
    <property type="term" value="P:regulation of neuron differentiation"/>
    <property type="evidence" value="ECO:0000315"/>
    <property type="project" value="MGI"/>
</dbReference>
<dbReference type="GO" id="GO:0006357">
    <property type="term" value="P:regulation of transcription by RNA polymerase II"/>
    <property type="evidence" value="ECO:0000314"/>
    <property type="project" value="MGI"/>
</dbReference>
<dbReference type="GO" id="GO:0060021">
    <property type="term" value="P:roof of mouth development"/>
    <property type="evidence" value="ECO:0000250"/>
    <property type="project" value="UniProtKB"/>
</dbReference>
<dbReference type="GO" id="GO:0007423">
    <property type="term" value="P:sensory organ development"/>
    <property type="evidence" value="ECO:0000270"/>
    <property type="project" value="UniProtKB"/>
</dbReference>
<dbReference type="GO" id="GO:0007605">
    <property type="term" value="P:sensory perception of sound"/>
    <property type="evidence" value="ECO:0000250"/>
    <property type="project" value="UniProtKB"/>
</dbReference>
<dbReference type="GO" id="GO:0048705">
    <property type="term" value="P:skeletal system morphogenesis"/>
    <property type="evidence" value="ECO:0000315"/>
    <property type="project" value="MGI"/>
</dbReference>
<dbReference type="GO" id="GO:0043588">
    <property type="term" value="P:skin development"/>
    <property type="evidence" value="ECO:0000316"/>
    <property type="project" value="MGI"/>
</dbReference>
<dbReference type="GO" id="GO:0048485">
    <property type="term" value="P:sympathetic nervous system development"/>
    <property type="evidence" value="ECO:0000316"/>
    <property type="project" value="MGI"/>
</dbReference>
<dbReference type="GO" id="GO:0006366">
    <property type="term" value="P:transcription by RNA polymerase II"/>
    <property type="evidence" value="ECO:0000314"/>
    <property type="project" value="MGI"/>
</dbReference>
<dbReference type="GO" id="GO:0021559">
    <property type="term" value="P:trigeminal nerve development"/>
    <property type="evidence" value="ECO:0000315"/>
    <property type="project" value="UniProtKB"/>
</dbReference>
<dbReference type="InterPro" id="IPR004979">
    <property type="entry name" value="TF_AP2"/>
</dbReference>
<dbReference type="InterPro" id="IPR008121">
    <property type="entry name" value="TF_AP2_alpha_N"/>
</dbReference>
<dbReference type="InterPro" id="IPR013854">
    <property type="entry name" value="TF_AP2_C"/>
</dbReference>
<dbReference type="PANTHER" id="PTHR10812">
    <property type="entry name" value="TRANSCRIPTION FACTOR AP-2"/>
    <property type="match status" value="1"/>
</dbReference>
<dbReference type="PANTHER" id="PTHR10812:SF8">
    <property type="entry name" value="TRANSCRIPTION FACTOR AP-2-ALPHA"/>
    <property type="match status" value="1"/>
</dbReference>
<dbReference type="Pfam" id="PF03299">
    <property type="entry name" value="TF_AP-2"/>
    <property type="match status" value="1"/>
</dbReference>
<dbReference type="PRINTS" id="PR01749">
    <property type="entry name" value="AP2ATNSCPFCT"/>
</dbReference>
<dbReference type="PRINTS" id="PR01748">
    <property type="entry name" value="AP2TNSCPFCT"/>
</dbReference>
<name>AP2A_MOUSE</name>
<accession>P34056</accession>
<accession>Q60740</accession>
<accession>Q60741</accession>
<accession>Q60742</accession>
<accession>Q60743</accession>
<accession>Q62067</accession>
<accession>Q62068</accession>
<accession>Q62069</accession>
<accession>Q91VX0</accession>
<accession>Q9CRY4</accession>